<evidence type="ECO:0000255" key="1">
    <source>
        <dbReference type="HAMAP-Rule" id="MF_00436"/>
    </source>
</evidence>
<evidence type="ECO:0000255" key="2">
    <source>
        <dbReference type="PROSITE-ProRule" id="PRU01346"/>
    </source>
</evidence>
<evidence type="ECO:0000256" key="3">
    <source>
        <dbReference type="SAM" id="MobiDB-lite"/>
    </source>
</evidence>
<gene>
    <name evidence="1" type="primary">hfq</name>
    <name type="ordered locus">FTH_0883</name>
</gene>
<proteinExistence type="inferred from homology"/>
<sequence length="109" mass="12484">MSRISSLQDPFLNALRKEKVSVSVYLVNGIKLQGQVEAFDQFCIVLRNTVNQMVYKHAISTIVPAKSVRMVYSSFNPYHQNSNDEQDENVDDIHSDDLEIQENEGNIHE</sequence>
<protein>
    <recommendedName>
        <fullName evidence="1">RNA-binding protein Hfq</fullName>
    </recommendedName>
</protein>
<keyword id="KW-0694">RNA-binding</keyword>
<keyword id="KW-0346">Stress response</keyword>
<accession>Q0BM86</accession>
<name>HFQ_FRATO</name>
<dbReference type="EMBL" id="CP000437">
    <property type="protein sequence ID" value="ABI82798.1"/>
    <property type="molecule type" value="Genomic_DNA"/>
</dbReference>
<dbReference type="RefSeq" id="WP_003015654.1">
    <property type="nucleotide sequence ID" value="NC_017463.1"/>
</dbReference>
<dbReference type="SMR" id="Q0BM86"/>
<dbReference type="GeneID" id="75265215"/>
<dbReference type="KEGG" id="fth:FTH_0883"/>
<dbReference type="GO" id="GO:0005829">
    <property type="term" value="C:cytosol"/>
    <property type="evidence" value="ECO:0007669"/>
    <property type="project" value="TreeGrafter"/>
</dbReference>
<dbReference type="GO" id="GO:0003723">
    <property type="term" value="F:RNA binding"/>
    <property type="evidence" value="ECO:0007669"/>
    <property type="project" value="UniProtKB-UniRule"/>
</dbReference>
<dbReference type="GO" id="GO:0006355">
    <property type="term" value="P:regulation of DNA-templated transcription"/>
    <property type="evidence" value="ECO:0007669"/>
    <property type="project" value="InterPro"/>
</dbReference>
<dbReference type="GO" id="GO:0043487">
    <property type="term" value="P:regulation of RNA stability"/>
    <property type="evidence" value="ECO:0007669"/>
    <property type="project" value="TreeGrafter"/>
</dbReference>
<dbReference type="GO" id="GO:0045974">
    <property type="term" value="P:regulation of translation, ncRNA-mediated"/>
    <property type="evidence" value="ECO:0007669"/>
    <property type="project" value="TreeGrafter"/>
</dbReference>
<dbReference type="CDD" id="cd01716">
    <property type="entry name" value="Hfq"/>
    <property type="match status" value="1"/>
</dbReference>
<dbReference type="FunFam" id="2.30.30.100:FF:000001">
    <property type="entry name" value="RNA-binding protein Hfq"/>
    <property type="match status" value="1"/>
</dbReference>
<dbReference type="Gene3D" id="2.30.30.100">
    <property type="match status" value="1"/>
</dbReference>
<dbReference type="HAMAP" id="MF_00436">
    <property type="entry name" value="Hfq"/>
    <property type="match status" value="1"/>
</dbReference>
<dbReference type="InterPro" id="IPR005001">
    <property type="entry name" value="Hfq"/>
</dbReference>
<dbReference type="InterPro" id="IPR010920">
    <property type="entry name" value="LSM_dom_sf"/>
</dbReference>
<dbReference type="InterPro" id="IPR047575">
    <property type="entry name" value="Sm"/>
</dbReference>
<dbReference type="NCBIfam" id="TIGR02383">
    <property type="entry name" value="Hfq"/>
    <property type="match status" value="1"/>
</dbReference>
<dbReference type="NCBIfam" id="NF001602">
    <property type="entry name" value="PRK00395.1"/>
    <property type="match status" value="1"/>
</dbReference>
<dbReference type="PANTHER" id="PTHR34772">
    <property type="entry name" value="RNA-BINDING PROTEIN HFQ"/>
    <property type="match status" value="1"/>
</dbReference>
<dbReference type="PANTHER" id="PTHR34772:SF1">
    <property type="entry name" value="RNA-BINDING PROTEIN HFQ"/>
    <property type="match status" value="1"/>
</dbReference>
<dbReference type="Pfam" id="PF17209">
    <property type="entry name" value="Hfq"/>
    <property type="match status" value="1"/>
</dbReference>
<dbReference type="SUPFAM" id="SSF50182">
    <property type="entry name" value="Sm-like ribonucleoproteins"/>
    <property type="match status" value="1"/>
</dbReference>
<dbReference type="PROSITE" id="PS52002">
    <property type="entry name" value="SM"/>
    <property type="match status" value="1"/>
</dbReference>
<comment type="function">
    <text evidence="1">RNA chaperone that binds small regulatory RNA (sRNAs) and mRNAs to facilitate mRNA translational regulation in response to envelope stress, environmental stress and changes in metabolite concentrations. Also binds with high specificity to tRNAs.</text>
</comment>
<comment type="subunit">
    <text evidence="1">Homohexamer.</text>
</comment>
<comment type="similarity">
    <text evidence="1">Belongs to the Hfq family.</text>
</comment>
<organism>
    <name type="scientific">Francisella tularensis subsp. holarctica (strain OSU18)</name>
    <dbReference type="NCBI Taxonomy" id="393011"/>
    <lineage>
        <taxon>Bacteria</taxon>
        <taxon>Pseudomonadati</taxon>
        <taxon>Pseudomonadota</taxon>
        <taxon>Gammaproteobacteria</taxon>
        <taxon>Thiotrichales</taxon>
        <taxon>Francisellaceae</taxon>
        <taxon>Francisella</taxon>
    </lineage>
</organism>
<reference key="1">
    <citation type="journal article" date="2006" name="J. Bacteriol.">
        <title>Chromosome rearrangement and diversification of Francisella tularensis revealed by the type B (OSU18) genome sequence.</title>
        <authorList>
            <person name="Petrosino J.F."/>
            <person name="Xiang Q."/>
            <person name="Karpathy S.E."/>
            <person name="Jiang H."/>
            <person name="Yerrapragada S."/>
            <person name="Liu Y."/>
            <person name="Gioia J."/>
            <person name="Hemphill L."/>
            <person name="Gonzalez A."/>
            <person name="Raghavan T.M."/>
            <person name="Uzman A."/>
            <person name="Fox G.E."/>
            <person name="Highlander S."/>
            <person name="Reichard M."/>
            <person name="Morton R.J."/>
            <person name="Clinkenbeard K.D."/>
            <person name="Weinstock G.M."/>
        </authorList>
    </citation>
    <scope>NUCLEOTIDE SEQUENCE [LARGE SCALE GENOMIC DNA]</scope>
    <source>
        <strain>OSU18</strain>
    </source>
</reference>
<feature type="chain" id="PRO_0000265157" description="RNA-binding protein Hfq">
    <location>
        <begin position="1"/>
        <end position="109"/>
    </location>
</feature>
<feature type="domain" description="Sm" evidence="2">
    <location>
        <begin position="9"/>
        <end position="68"/>
    </location>
</feature>
<feature type="region of interest" description="Disordered" evidence="3">
    <location>
        <begin position="77"/>
        <end position="109"/>
    </location>
</feature>